<dbReference type="EMBL" id="AE015927">
    <property type="protein sequence ID" value="AAO36769.1"/>
    <property type="status" value="ALT_INIT"/>
    <property type="molecule type" value="Genomic_DNA"/>
</dbReference>
<dbReference type="RefSeq" id="WP_035108957.1">
    <property type="nucleotide sequence ID" value="NC_004557.1"/>
</dbReference>
<dbReference type="SMR" id="Q891S6"/>
<dbReference type="STRING" id="212717.CTC_02291"/>
<dbReference type="GeneID" id="24252635"/>
<dbReference type="KEGG" id="ctc:CTC_02291"/>
<dbReference type="HOGENOM" id="CLU_054493_1_0_9"/>
<dbReference type="OrthoDB" id="9776534at2"/>
<dbReference type="Proteomes" id="UP000001412">
    <property type="component" value="Chromosome"/>
</dbReference>
<dbReference type="GO" id="GO:0005737">
    <property type="term" value="C:cytoplasm"/>
    <property type="evidence" value="ECO:0007669"/>
    <property type="project" value="UniProtKB-SubCell"/>
</dbReference>
<dbReference type="GO" id="GO:0044183">
    <property type="term" value="F:protein folding chaperone"/>
    <property type="evidence" value="ECO:0007669"/>
    <property type="project" value="TreeGrafter"/>
</dbReference>
<dbReference type="GO" id="GO:0051082">
    <property type="term" value="F:unfolded protein binding"/>
    <property type="evidence" value="ECO:0007669"/>
    <property type="project" value="UniProtKB-UniRule"/>
</dbReference>
<dbReference type="GO" id="GO:0042026">
    <property type="term" value="P:protein refolding"/>
    <property type="evidence" value="ECO:0007669"/>
    <property type="project" value="TreeGrafter"/>
</dbReference>
<dbReference type="CDD" id="cd00498">
    <property type="entry name" value="Hsp33"/>
    <property type="match status" value="1"/>
</dbReference>
<dbReference type="Gene3D" id="3.55.30.10">
    <property type="entry name" value="Hsp33 domain"/>
    <property type="match status" value="1"/>
</dbReference>
<dbReference type="Gene3D" id="3.90.1280.10">
    <property type="entry name" value="HSP33 redox switch-like"/>
    <property type="match status" value="1"/>
</dbReference>
<dbReference type="HAMAP" id="MF_00117">
    <property type="entry name" value="HslO"/>
    <property type="match status" value="1"/>
</dbReference>
<dbReference type="InterPro" id="IPR000397">
    <property type="entry name" value="Heat_shock_Hsp33"/>
</dbReference>
<dbReference type="InterPro" id="IPR016154">
    <property type="entry name" value="Heat_shock_Hsp33_C"/>
</dbReference>
<dbReference type="InterPro" id="IPR016153">
    <property type="entry name" value="Heat_shock_Hsp33_N"/>
</dbReference>
<dbReference type="NCBIfam" id="NF001033">
    <property type="entry name" value="PRK00114.1"/>
    <property type="match status" value="1"/>
</dbReference>
<dbReference type="PANTHER" id="PTHR30111">
    <property type="entry name" value="33 KDA CHAPERONIN"/>
    <property type="match status" value="1"/>
</dbReference>
<dbReference type="PANTHER" id="PTHR30111:SF1">
    <property type="entry name" value="33 KDA CHAPERONIN"/>
    <property type="match status" value="1"/>
</dbReference>
<dbReference type="Pfam" id="PF01430">
    <property type="entry name" value="HSP33"/>
    <property type="match status" value="1"/>
</dbReference>
<dbReference type="PIRSF" id="PIRSF005261">
    <property type="entry name" value="Heat_shock_Hsp33"/>
    <property type="match status" value="1"/>
</dbReference>
<dbReference type="SUPFAM" id="SSF64397">
    <property type="entry name" value="Hsp33 domain"/>
    <property type="match status" value="1"/>
</dbReference>
<dbReference type="SUPFAM" id="SSF118352">
    <property type="entry name" value="HSP33 redox switch-like"/>
    <property type="match status" value="1"/>
</dbReference>
<comment type="function">
    <text evidence="1">Redox regulated molecular chaperone. Protects both thermally unfolding and oxidatively damaged proteins from irreversible aggregation. Plays an important role in the bacterial defense system toward oxidative stress.</text>
</comment>
<comment type="subcellular location">
    <subcellularLocation>
        <location evidence="1">Cytoplasm</location>
    </subcellularLocation>
</comment>
<comment type="PTM">
    <text evidence="1">Under oxidizing conditions two disulfide bonds are formed involving the reactive cysteines. Under reducing conditions zinc is bound to the reactive cysteines and the protein is inactive.</text>
</comment>
<comment type="similarity">
    <text evidence="1">Belongs to the HSP33 family.</text>
</comment>
<comment type="sequence caution" evidence="2">
    <conflict type="erroneous initiation">
        <sequence resource="EMBL-CDS" id="AAO36769"/>
    </conflict>
</comment>
<name>HSLO_CLOTE</name>
<accession>Q891S6</accession>
<feature type="chain" id="PRO_0000192172" description="33 kDa chaperonin">
    <location>
        <begin position="1"/>
        <end position="294"/>
    </location>
</feature>
<feature type="disulfide bond" description="Redox-active" evidence="1">
    <location>
        <begin position="238"/>
        <end position="240"/>
    </location>
</feature>
<feature type="disulfide bond" description="Redox-active" evidence="1">
    <location>
        <begin position="271"/>
        <end position="274"/>
    </location>
</feature>
<evidence type="ECO:0000255" key="1">
    <source>
        <dbReference type="HAMAP-Rule" id="MF_00117"/>
    </source>
</evidence>
<evidence type="ECO:0000305" key="2"/>
<reference key="1">
    <citation type="journal article" date="2003" name="Proc. Natl. Acad. Sci. U.S.A.">
        <title>The genome sequence of Clostridium tetani, the causative agent of tetanus disease.</title>
        <authorList>
            <person name="Brueggemann H."/>
            <person name="Baeumer S."/>
            <person name="Fricke W.F."/>
            <person name="Wiezer A."/>
            <person name="Liesegang H."/>
            <person name="Decker I."/>
            <person name="Herzberg C."/>
            <person name="Martinez-Arias R."/>
            <person name="Merkl R."/>
            <person name="Henne A."/>
            <person name="Gottschalk G."/>
        </authorList>
    </citation>
    <scope>NUCLEOTIDE SEQUENCE [LARGE SCALE GENOMIC DNA]</scope>
    <source>
        <strain>Massachusetts / E88</strain>
    </source>
</reference>
<sequence>MADKLIKATAKDGQVRIIGAITTELVNKGIEVHKCSPTGAAALGRMLTAGSLMGSMLKSEKDTITIKIDGGGEAKGVLVTAYPEGKVKGYIGNPLVHLPLNQNGKLDVGGAIGKNGNITVIKDLGLKDPYIGQVPIYSGEIGDDLAYYFTVSEQTPSAVGLGVLVDKDLSIKASGGFIIQMMPGADELLADFITYRLEEIPSITELISKGMSIEEILEFIFEGMDLKILEGIVPEYTCDCSREKIDRALISIGYKDLKEIYDEGKTEELVCQFCNEKYFYDHEKIGELLRIMNN</sequence>
<organism>
    <name type="scientific">Clostridium tetani (strain Massachusetts / E88)</name>
    <dbReference type="NCBI Taxonomy" id="212717"/>
    <lineage>
        <taxon>Bacteria</taxon>
        <taxon>Bacillati</taxon>
        <taxon>Bacillota</taxon>
        <taxon>Clostridia</taxon>
        <taxon>Eubacteriales</taxon>
        <taxon>Clostridiaceae</taxon>
        <taxon>Clostridium</taxon>
    </lineage>
</organism>
<proteinExistence type="inferred from homology"/>
<gene>
    <name evidence="1" type="primary">hslO</name>
    <name type="ordered locus">CTC_02291</name>
</gene>
<keyword id="KW-0143">Chaperone</keyword>
<keyword id="KW-0963">Cytoplasm</keyword>
<keyword id="KW-1015">Disulfide bond</keyword>
<keyword id="KW-0676">Redox-active center</keyword>
<keyword id="KW-1185">Reference proteome</keyword>
<keyword id="KW-0862">Zinc</keyword>
<protein>
    <recommendedName>
        <fullName evidence="1">33 kDa chaperonin</fullName>
    </recommendedName>
    <alternativeName>
        <fullName evidence="1">Heat shock protein 33 homolog</fullName>
        <shortName evidence="1">HSP33</shortName>
    </alternativeName>
</protein>